<comment type="catalytic activity">
    <reaction evidence="2">
        <text>GTP + H2O = 7,8-dihydroneopterin 3'-triphosphate + formate + H(+)</text>
        <dbReference type="Rhea" id="RHEA:17473"/>
        <dbReference type="ChEBI" id="CHEBI:15377"/>
        <dbReference type="ChEBI" id="CHEBI:15378"/>
        <dbReference type="ChEBI" id="CHEBI:15740"/>
        <dbReference type="ChEBI" id="CHEBI:37565"/>
        <dbReference type="ChEBI" id="CHEBI:58462"/>
        <dbReference type="EC" id="3.5.4.16"/>
    </reaction>
</comment>
<comment type="pathway">
    <text evidence="2">Cofactor biosynthesis; 7,8-dihydroneopterin triphosphate biosynthesis; 7,8-dihydroneopterin triphosphate from GTP: step 1/1.</text>
</comment>
<comment type="subunit">
    <text evidence="1">Toroid-shaped homodecamer, composed of two pentamers of five dimers.</text>
</comment>
<comment type="similarity">
    <text evidence="2">Belongs to the GTP cyclohydrolase I family.</text>
</comment>
<accession>Q5M391</accession>
<protein>
    <recommendedName>
        <fullName evidence="2">GTP cyclohydrolase 1</fullName>
        <ecNumber evidence="2">3.5.4.16</ecNumber>
    </recommendedName>
    <alternativeName>
        <fullName evidence="2">GTP cyclohydrolase I</fullName>
        <shortName evidence="2">GTP-CH-I</shortName>
    </alternativeName>
</protein>
<proteinExistence type="inferred from homology"/>
<name>GCH1_STRT2</name>
<feature type="chain" id="PRO_1000043751" description="GTP cyclohydrolase 1">
    <location>
        <begin position="1"/>
        <end position="187"/>
    </location>
</feature>
<feature type="binding site" evidence="2">
    <location>
        <position position="76"/>
    </location>
    <ligand>
        <name>Zn(2+)</name>
        <dbReference type="ChEBI" id="CHEBI:29105"/>
    </ligand>
</feature>
<feature type="binding site" evidence="2">
    <location>
        <position position="79"/>
    </location>
    <ligand>
        <name>Zn(2+)</name>
        <dbReference type="ChEBI" id="CHEBI:29105"/>
    </ligand>
</feature>
<feature type="binding site" evidence="2">
    <location>
        <position position="148"/>
    </location>
    <ligand>
        <name>Zn(2+)</name>
        <dbReference type="ChEBI" id="CHEBI:29105"/>
    </ligand>
</feature>
<organism>
    <name type="scientific">Streptococcus thermophilus (strain ATCC BAA-250 / LMG 18311)</name>
    <dbReference type="NCBI Taxonomy" id="264199"/>
    <lineage>
        <taxon>Bacteria</taxon>
        <taxon>Bacillati</taxon>
        <taxon>Bacillota</taxon>
        <taxon>Bacilli</taxon>
        <taxon>Lactobacillales</taxon>
        <taxon>Streptococcaceae</taxon>
        <taxon>Streptococcus</taxon>
    </lineage>
</organism>
<dbReference type="EC" id="3.5.4.16" evidence="2"/>
<dbReference type="EMBL" id="CP000023">
    <property type="protein sequence ID" value="AAV61147.1"/>
    <property type="molecule type" value="Genomic_DNA"/>
</dbReference>
<dbReference type="RefSeq" id="WP_011226385.1">
    <property type="nucleotide sequence ID" value="NC_006448.1"/>
</dbReference>
<dbReference type="SMR" id="Q5M391"/>
<dbReference type="STRING" id="264199.stu1544"/>
<dbReference type="GeneID" id="66899290"/>
<dbReference type="KEGG" id="stl:stu1544"/>
<dbReference type="eggNOG" id="COG0302">
    <property type="taxonomic scope" value="Bacteria"/>
</dbReference>
<dbReference type="HOGENOM" id="CLU_049768_3_3_9"/>
<dbReference type="UniPathway" id="UPA00848">
    <property type="reaction ID" value="UER00151"/>
</dbReference>
<dbReference type="Proteomes" id="UP000001170">
    <property type="component" value="Chromosome"/>
</dbReference>
<dbReference type="GO" id="GO:0005737">
    <property type="term" value="C:cytoplasm"/>
    <property type="evidence" value="ECO:0007669"/>
    <property type="project" value="TreeGrafter"/>
</dbReference>
<dbReference type="GO" id="GO:0005525">
    <property type="term" value="F:GTP binding"/>
    <property type="evidence" value="ECO:0007669"/>
    <property type="project" value="UniProtKB-KW"/>
</dbReference>
<dbReference type="GO" id="GO:0003934">
    <property type="term" value="F:GTP cyclohydrolase I activity"/>
    <property type="evidence" value="ECO:0007669"/>
    <property type="project" value="UniProtKB-UniRule"/>
</dbReference>
<dbReference type="GO" id="GO:0008270">
    <property type="term" value="F:zinc ion binding"/>
    <property type="evidence" value="ECO:0007669"/>
    <property type="project" value="UniProtKB-UniRule"/>
</dbReference>
<dbReference type="GO" id="GO:0006730">
    <property type="term" value="P:one-carbon metabolic process"/>
    <property type="evidence" value="ECO:0007669"/>
    <property type="project" value="UniProtKB-UniRule"/>
</dbReference>
<dbReference type="GO" id="GO:0006729">
    <property type="term" value="P:tetrahydrobiopterin biosynthetic process"/>
    <property type="evidence" value="ECO:0007669"/>
    <property type="project" value="TreeGrafter"/>
</dbReference>
<dbReference type="GO" id="GO:0046654">
    <property type="term" value="P:tetrahydrofolate biosynthetic process"/>
    <property type="evidence" value="ECO:0007669"/>
    <property type="project" value="UniProtKB-UniRule"/>
</dbReference>
<dbReference type="FunFam" id="1.10.286.10:FF:000001">
    <property type="entry name" value="GTP cyclohydrolase 1"/>
    <property type="match status" value="1"/>
</dbReference>
<dbReference type="FunFam" id="3.30.1130.10:FF:000001">
    <property type="entry name" value="GTP cyclohydrolase 1"/>
    <property type="match status" value="1"/>
</dbReference>
<dbReference type="Gene3D" id="1.10.286.10">
    <property type="match status" value="1"/>
</dbReference>
<dbReference type="Gene3D" id="3.30.1130.10">
    <property type="match status" value="1"/>
</dbReference>
<dbReference type="HAMAP" id="MF_00223">
    <property type="entry name" value="FolE"/>
    <property type="match status" value="1"/>
</dbReference>
<dbReference type="InterPro" id="IPR043133">
    <property type="entry name" value="GTP-CH-I_C/QueF"/>
</dbReference>
<dbReference type="InterPro" id="IPR043134">
    <property type="entry name" value="GTP-CH-I_N"/>
</dbReference>
<dbReference type="InterPro" id="IPR001474">
    <property type="entry name" value="GTP_CycHdrlase_I"/>
</dbReference>
<dbReference type="InterPro" id="IPR018234">
    <property type="entry name" value="GTP_CycHdrlase_I_CS"/>
</dbReference>
<dbReference type="InterPro" id="IPR020602">
    <property type="entry name" value="GTP_CycHdrlase_I_dom"/>
</dbReference>
<dbReference type="NCBIfam" id="TIGR00063">
    <property type="entry name" value="folE"/>
    <property type="match status" value="1"/>
</dbReference>
<dbReference type="NCBIfam" id="NF006825">
    <property type="entry name" value="PRK09347.1-2"/>
    <property type="match status" value="1"/>
</dbReference>
<dbReference type="NCBIfam" id="NF006826">
    <property type="entry name" value="PRK09347.1-3"/>
    <property type="match status" value="1"/>
</dbReference>
<dbReference type="PANTHER" id="PTHR11109:SF7">
    <property type="entry name" value="GTP CYCLOHYDROLASE 1"/>
    <property type="match status" value="1"/>
</dbReference>
<dbReference type="PANTHER" id="PTHR11109">
    <property type="entry name" value="GTP CYCLOHYDROLASE I"/>
    <property type="match status" value="1"/>
</dbReference>
<dbReference type="Pfam" id="PF01227">
    <property type="entry name" value="GTP_cyclohydroI"/>
    <property type="match status" value="1"/>
</dbReference>
<dbReference type="SUPFAM" id="SSF55620">
    <property type="entry name" value="Tetrahydrobiopterin biosynthesis enzymes-like"/>
    <property type="match status" value="1"/>
</dbReference>
<dbReference type="PROSITE" id="PS00859">
    <property type="entry name" value="GTP_CYCLOHYDROL_1_1"/>
    <property type="match status" value="1"/>
</dbReference>
<dbReference type="PROSITE" id="PS00860">
    <property type="entry name" value="GTP_CYCLOHYDROL_1_2"/>
    <property type="match status" value="1"/>
</dbReference>
<gene>
    <name evidence="2" type="primary">folE</name>
    <name type="ordered locus">stu1544</name>
</gene>
<reference key="1">
    <citation type="journal article" date="2004" name="Nat. Biotechnol.">
        <title>Complete sequence and comparative genome analysis of the dairy bacterium Streptococcus thermophilus.</title>
        <authorList>
            <person name="Bolotin A."/>
            <person name="Quinquis B."/>
            <person name="Renault P."/>
            <person name="Sorokin A."/>
            <person name="Ehrlich S.D."/>
            <person name="Kulakauskas S."/>
            <person name="Lapidus A."/>
            <person name="Goltsman E."/>
            <person name="Mazur M."/>
            <person name="Pusch G.D."/>
            <person name="Fonstein M."/>
            <person name="Overbeek R."/>
            <person name="Kyprides N."/>
            <person name="Purnelle B."/>
            <person name="Prozzi D."/>
            <person name="Ngui K."/>
            <person name="Masuy D."/>
            <person name="Hancy F."/>
            <person name="Burteau S."/>
            <person name="Boutry M."/>
            <person name="Delcour J."/>
            <person name="Goffeau A."/>
            <person name="Hols P."/>
        </authorList>
    </citation>
    <scope>NUCLEOTIDE SEQUENCE [LARGE SCALE GENOMIC DNA]</scope>
    <source>
        <strain>ATCC BAA-250 / LMG 18311</strain>
    </source>
</reference>
<evidence type="ECO:0000250" key="1"/>
<evidence type="ECO:0000255" key="2">
    <source>
        <dbReference type="HAMAP-Rule" id="MF_00223"/>
    </source>
</evidence>
<keyword id="KW-0342">GTP-binding</keyword>
<keyword id="KW-0378">Hydrolase</keyword>
<keyword id="KW-0479">Metal-binding</keyword>
<keyword id="KW-0547">Nucleotide-binding</keyword>
<keyword id="KW-0554">One-carbon metabolism</keyword>
<keyword id="KW-1185">Reference proteome</keyword>
<keyword id="KW-0862">Zinc</keyword>
<sequence length="187" mass="21220">MENQEKVEQAVYQLLEALGENPEREGLLDTPKRVAKMYAEMFSGLNEDPKDQFTAVFSEVHDEVVLVKDIPFYSMCEHHLVPFYGMAHVAYLPSGDKVTGLSKLARAVEVAARRPQLQERLTDQVATALEEALNPRGVFVMVEAEHMCMTMRGIKKPGSKTITTVAKGIYKEDREERKEILSLMRDF</sequence>